<dbReference type="EMBL" id="AE017340">
    <property type="protein sequence ID" value="AAV83455.1"/>
    <property type="molecule type" value="Genomic_DNA"/>
</dbReference>
<dbReference type="RefSeq" id="WP_011235846.1">
    <property type="nucleotide sequence ID" value="NC_006512.1"/>
</dbReference>
<dbReference type="SMR" id="Q5QZI2"/>
<dbReference type="STRING" id="283942.IL2623"/>
<dbReference type="GeneID" id="41337822"/>
<dbReference type="KEGG" id="ilo:IL2623"/>
<dbReference type="eggNOG" id="COG0711">
    <property type="taxonomic scope" value="Bacteria"/>
</dbReference>
<dbReference type="HOGENOM" id="CLU_079215_4_5_6"/>
<dbReference type="OrthoDB" id="9788020at2"/>
<dbReference type="Proteomes" id="UP000001171">
    <property type="component" value="Chromosome"/>
</dbReference>
<dbReference type="GO" id="GO:0005886">
    <property type="term" value="C:plasma membrane"/>
    <property type="evidence" value="ECO:0007669"/>
    <property type="project" value="UniProtKB-SubCell"/>
</dbReference>
<dbReference type="GO" id="GO:0045259">
    <property type="term" value="C:proton-transporting ATP synthase complex"/>
    <property type="evidence" value="ECO:0007669"/>
    <property type="project" value="UniProtKB-KW"/>
</dbReference>
<dbReference type="GO" id="GO:0046933">
    <property type="term" value="F:proton-transporting ATP synthase activity, rotational mechanism"/>
    <property type="evidence" value="ECO:0007669"/>
    <property type="project" value="UniProtKB-UniRule"/>
</dbReference>
<dbReference type="GO" id="GO:0046961">
    <property type="term" value="F:proton-transporting ATPase activity, rotational mechanism"/>
    <property type="evidence" value="ECO:0007669"/>
    <property type="project" value="TreeGrafter"/>
</dbReference>
<dbReference type="CDD" id="cd06503">
    <property type="entry name" value="ATP-synt_Fo_b"/>
    <property type="match status" value="1"/>
</dbReference>
<dbReference type="Gene3D" id="6.10.250.1580">
    <property type="match status" value="1"/>
</dbReference>
<dbReference type="HAMAP" id="MF_01398">
    <property type="entry name" value="ATP_synth_b_bprime"/>
    <property type="match status" value="1"/>
</dbReference>
<dbReference type="InterPro" id="IPR028987">
    <property type="entry name" value="ATP_synth_B-like_membr_sf"/>
</dbReference>
<dbReference type="InterPro" id="IPR002146">
    <property type="entry name" value="ATP_synth_b/b'su_bac/chlpt"/>
</dbReference>
<dbReference type="InterPro" id="IPR005864">
    <property type="entry name" value="ATP_synth_F0_bsu_bac"/>
</dbReference>
<dbReference type="InterPro" id="IPR050059">
    <property type="entry name" value="ATP_synthase_B_chain"/>
</dbReference>
<dbReference type="NCBIfam" id="TIGR01144">
    <property type="entry name" value="ATP_synt_b"/>
    <property type="match status" value="1"/>
</dbReference>
<dbReference type="NCBIfam" id="NF004411">
    <property type="entry name" value="PRK05759.1-2"/>
    <property type="match status" value="1"/>
</dbReference>
<dbReference type="NCBIfam" id="NF004413">
    <property type="entry name" value="PRK05759.1-4"/>
    <property type="match status" value="1"/>
</dbReference>
<dbReference type="PANTHER" id="PTHR33445:SF1">
    <property type="entry name" value="ATP SYNTHASE SUBUNIT B"/>
    <property type="match status" value="1"/>
</dbReference>
<dbReference type="PANTHER" id="PTHR33445">
    <property type="entry name" value="ATP SYNTHASE SUBUNIT B', CHLOROPLASTIC"/>
    <property type="match status" value="1"/>
</dbReference>
<dbReference type="Pfam" id="PF00430">
    <property type="entry name" value="ATP-synt_B"/>
    <property type="match status" value="1"/>
</dbReference>
<dbReference type="SUPFAM" id="SSF81573">
    <property type="entry name" value="F1F0 ATP synthase subunit B, membrane domain"/>
    <property type="match status" value="1"/>
</dbReference>
<name>ATPF_IDILO</name>
<gene>
    <name evidence="1" type="primary">atpF</name>
    <name type="ordered locus">IL2623</name>
</gene>
<feature type="chain" id="PRO_0000368529" description="ATP synthase subunit b">
    <location>
        <begin position="1"/>
        <end position="156"/>
    </location>
</feature>
<feature type="transmembrane region" description="Helical" evidence="1">
    <location>
        <begin position="7"/>
        <end position="27"/>
    </location>
</feature>
<sequence length="156" mass="17706">MNINATLIGQTIAFIVFVWFCMKFVWPPIIKAIEERQKKIADGLNAGERAQKDLEKAQQEIAEQLKEAKQQAAEIIEQSKKRGAKIVEEETQRGHEEREKIVAAGHEEVAAERNRVREELRKQVAVLAVSGAQKIIEREIDKDAHSDIVEKLVAEL</sequence>
<accession>Q5QZI2</accession>
<proteinExistence type="inferred from homology"/>
<reference key="1">
    <citation type="journal article" date="2004" name="Proc. Natl. Acad. Sci. U.S.A.">
        <title>Genome sequence of the deep-sea gamma-proteobacterium Idiomarina loihiensis reveals amino acid fermentation as a source of carbon and energy.</title>
        <authorList>
            <person name="Hou S."/>
            <person name="Saw J.H."/>
            <person name="Lee K.S."/>
            <person name="Freitas T.A."/>
            <person name="Belisle C."/>
            <person name="Kawarabayasi Y."/>
            <person name="Donachie S.P."/>
            <person name="Pikina A."/>
            <person name="Galperin M.Y."/>
            <person name="Koonin E.V."/>
            <person name="Makarova K.S."/>
            <person name="Omelchenko M.V."/>
            <person name="Sorokin A."/>
            <person name="Wolf Y.I."/>
            <person name="Li Q.X."/>
            <person name="Keum Y.S."/>
            <person name="Campbell S."/>
            <person name="Denery J."/>
            <person name="Aizawa S."/>
            <person name="Shibata S."/>
            <person name="Malahoff A."/>
            <person name="Alam M."/>
        </authorList>
    </citation>
    <scope>NUCLEOTIDE SEQUENCE [LARGE SCALE GENOMIC DNA]</scope>
    <source>
        <strain>ATCC BAA-735 / DSM 15497 / L2-TR</strain>
    </source>
</reference>
<comment type="function">
    <text evidence="1">F(1)F(0) ATP synthase produces ATP from ADP in the presence of a proton or sodium gradient. F-type ATPases consist of two structural domains, F(1) containing the extramembraneous catalytic core and F(0) containing the membrane proton channel, linked together by a central stalk and a peripheral stalk. During catalysis, ATP synthesis in the catalytic domain of F(1) is coupled via a rotary mechanism of the central stalk subunits to proton translocation.</text>
</comment>
<comment type="function">
    <text evidence="1">Component of the F(0) channel, it forms part of the peripheral stalk, linking F(1) to F(0).</text>
</comment>
<comment type="subunit">
    <text evidence="1">F-type ATPases have 2 components, F(1) - the catalytic core - and F(0) - the membrane proton channel. F(1) has five subunits: alpha(3), beta(3), gamma(1), delta(1), epsilon(1). F(0) has three main subunits: a(1), b(2) and c(10-14). The alpha and beta chains form an alternating ring which encloses part of the gamma chain. F(1) is attached to F(0) by a central stalk formed by the gamma and epsilon chains, while a peripheral stalk is formed by the delta and b chains.</text>
</comment>
<comment type="subcellular location">
    <subcellularLocation>
        <location evidence="1">Cell inner membrane</location>
        <topology evidence="1">Single-pass membrane protein</topology>
    </subcellularLocation>
</comment>
<comment type="similarity">
    <text evidence="1">Belongs to the ATPase B chain family.</text>
</comment>
<protein>
    <recommendedName>
        <fullName evidence="1">ATP synthase subunit b</fullName>
    </recommendedName>
    <alternativeName>
        <fullName evidence="1">ATP synthase F(0) sector subunit b</fullName>
    </alternativeName>
    <alternativeName>
        <fullName evidence="1">ATPase subunit I</fullName>
    </alternativeName>
    <alternativeName>
        <fullName evidence="1">F-type ATPase subunit b</fullName>
        <shortName evidence="1">F-ATPase subunit b</shortName>
    </alternativeName>
</protein>
<organism>
    <name type="scientific">Idiomarina loihiensis (strain ATCC BAA-735 / DSM 15497 / L2-TR)</name>
    <dbReference type="NCBI Taxonomy" id="283942"/>
    <lineage>
        <taxon>Bacteria</taxon>
        <taxon>Pseudomonadati</taxon>
        <taxon>Pseudomonadota</taxon>
        <taxon>Gammaproteobacteria</taxon>
        <taxon>Alteromonadales</taxon>
        <taxon>Idiomarinaceae</taxon>
        <taxon>Idiomarina</taxon>
    </lineage>
</organism>
<keyword id="KW-0066">ATP synthesis</keyword>
<keyword id="KW-0997">Cell inner membrane</keyword>
<keyword id="KW-1003">Cell membrane</keyword>
<keyword id="KW-0138">CF(0)</keyword>
<keyword id="KW-0375">Hydrogen ion transport</keyword>
<keyword id="KW-0406">Ion transport</keyword>
<keyword id="KW-0472">Membrane</keyword>
<keyword id="KW-1185">Reference proteome</keyword>
<keyword id="KW-0812">Transmembrane</keyword>
<keyword id="KW-1133">Transmembrane helix</keyword>
<keyword id="KW-0813">Transport</keyword>
<evidence type="ECO:0000255" key="1">
    <source>
        <dbReference type="HAMAP-Rule" id="MF_01398"/>
    </source>
</evidence>